<organism>
    <name type="scientific">Streptococcus pneumoniae (strain 70585)</name>
    <dbReference type="NCBI Taxonomy" id="488221"/>
    <lineage>
        <taxon>Bacteria</taxon>
        <taxon>Bacillati</taxon>
        <taxon>Bacillota</taxon>
        <taxon>Bacilli</taxon>
        <taxon>Lactobacillales</taxon>
        <taxon>Streptococcaceae</taxon>
        <taxon>Streptococcus</taxon>
    </lineage>
</organism>
<comment type="function">
    <text evidence="1">Involved in mRNA degradation. Catalyzes the phosphorolysis of single-stranded polyribonucleotides processively in the 3'- to 5'-direction.</text>
</comment>
<comment type="catalytic activity">
    <reaction evidence="1">
        <text>RNA(n+1) + phosphate = RNA(n) + a ribonucleoside 5'-diphosphate</text>
        <dbReference type="Rhea" id="RHEA:22096"/>
        <dbReference type="Rhea" id="RHEA-COMP:14527"/>
        <dbReference type="Rhea" id="RHEA-COMP:17342"/>
        <dbReference type="ChEBI" id="CHEBI:43474"/>
        <dbReference type="ChEBI" id="CHEBI:57930"/>
        <dbReference type="ChEBI" id="CHEBI:140395"/>
        <dbReference type="EC" id="2.7.7.8"/>
    </reaction>
</comment>
<comment type="cofactor">
    <cofactor evidence="1">
        <name>Mg(2+)</name>
        <dbReference type="ChEBI" id="CHEBI:18420"/>
    </cofactor>
</comment>
<comment type="subcellular location">
    <subcellularLocation>
        <location evidence="1">Cytoplasm</location>
    </subcellularLocation>
</comment>
<comment type="similarity">
    <text evidence="1">Belongs to the polyribonucleotide nucleotidyltransferase family.</text>
</comment>
<sequence length="737" mass="81000">MAKQVFQTTFAGRELIVETGQVAKQANGSVVVRYGESTVLTAAVMSKKMATGDFFPLQVNYEEKMYAAGKFPGGFMKREGRPSTDATLTARLIDRPIRPMFAEGFRNEVQVINTVLSYDENASAPMAAMFGSSLALSISDIPFDGPIAGVQVGYVDGQIIINPSQEQAEQSLLELTVAGTKHAINMVESGAKELSEEIMLEALLKGHEAVKELIAFQEEIVAAVGKEKAEVELLHVDAELQAEIIAAYNSDLQKAVQVEEKLAREAATQAVKDQVTAVYEEKYANHEEFDRIMRDVAEILEQMEHAEVRRLITEDKVRPDGRKVDEIRPLDAVVDFLPRVHGSGLFTRGQTQALSVLTLAPMGETQIIDGLDPEYKKRFMHHYNFPQYSVGETGRYGAPGRREIGHGALGERALAQVLPSLEEFPYAIRLVAEVLESNGSSSQASICAGTLALMAGGVPIKAPVAGIAMGLISDGNNYTVLTDIQGLEDHFGDMDFKVAGTRDGITALQMDIKIQGITAEILTEALAQAKKARFEILDVIEATIPEVRPELAPTAPKIDTIKIDVDKIKIVIGKGGETIDKIIAETGVKIDIDEEGNVSIYSSDQDAINRAKEIIAGLVREAKVDEVYRAKVVRIEKFGAFVNLFDKTDALVHISEMAWTRTNRVEDLVEIGDEVDVKVIKIDEKGRIDASMKALLPRPPKPEHDEKGEKSERPHRPRHHKDHKPKKEFTETPKDSE</sequence>
<proteinExistence type="inferred from homology"/>
<accession>C1C5V9</accession>
<evidence type="ECO:0000255" key="1">
    <source>
        <dbReference type="HAMAP-Rule" id="MF_01595"/>
    </source>
</evidence>
<evidence type="ECO:0000256" key="2">
    <source>
        <dbReference type="SAM" id="MobiDB-lite"/>
    </source>
</evidence>
<keyword id="KW-0963">Cytoplasm</keyword>
<keyword id="KW-0460">Magnesium</keyword>
<keyword id="KW-0479">Metal-binding</keyword>
<keyword id="KW-0548">Nucleotidyltransferase</keyword>
<keyword id="KW-0694">RNA-binding</keyword>
<keyword id="KW-0808">Transferase</keyword>
<protein>
    <recommendedName>
        <fullName evidence="1">Polyribonucleotide nucleotidyltransferase</fullName>
        <ecNumber evidence="1">2.7.7.8</ecNumber>
    </recommendedName>
    <alternativeName>
        <fullName evidence="1">Polynucleotide phosphorylase</fullName>
        <shortName evidence="1">PNPase</shortName>
    </alternativeName>
</protein>
<reference key="1">
    <citation type="journal article" date="2010" name="Genome Biol.">
        <title>Structure and dynamics of the pan-genome of Streptococcus pneumoniae and closely related species.</title>
        <authorList>
            <person name="Donati C."/>
            <person name="Hiller N.L."/>
            <person name="Tettelin H."/>
            <person name="Muzzi A."/>
            <person name="Croucher N.J."/>
            <person name="Angiuoli S.V."/>
            <person name="Oggioni M."/>
            <person name="Dunning Hotopp J.C."/>
            <person name="Hu F.Z."/>
            <person name="Riley D.R."/>
            <person name="Covacci A."/>
            <person name="Mitchell T.J."/>
            <person name="Bentley S.D."/>
            <person name="Kilian M."/>
            <person name="Ehrlich G.D."/>
            <person name="Rappuoli R."/>
            <person name="Moxon E.R."/>
            <person name="Masignani V."/>
        </authorList>
    </citation>
    <scope>NUCLEOTIDE SEQUENCE [LARGE SCALE GENOMIC DNA]</scope>
    <source>
        <strain>70585</strain>
    </source>
</reference>
<feature type="chain" id="PRO_1000185753" description="Polyribonucleotide nucleotidyltransferase">
    <location>
        <begin position="1"/>
        <end position="737"/>
    </location>
</feature>
<feature type="domain" description="KH" evidence="1">
    <location>
        <begin position="556"/>
        <end position="615"/>
    </location>
</feature>
<feature type="domain" description="S1 motif" evidence="1">
    <location>
        <begin position="625"/>
        <end position="693"/>
    </location>
</feature>
<feature type="region of interest" description="Disordered" evidence="2">
    <location>
        <begin position="691"/>
        <end position="737"/>
    </location>
</feature>
<feature type="compositionally biased region" description="Basic and acidic residues" evidence="2">
    <location>
        <begin position="700"/>
        <end position="714"/>
    </location>
</feature>
<feature type="compositionally biased region" description="Basic residues" evidence="2">
    <location>
        <begin position="715"/>
        <end position="724"/>
    </location>
</feature>
<feature type="compositionally biased region" description="Basic and acidic residues" evidence="2">
    <location>
        <begin position="725"/>
        <end position="737"/>
    </location>
</feature>
<feature type="binding site" evidence="1">
    <location>
        <position position="489"/>
    </location>
    <ligand>
        <name>Mg(2+)</name>
        <dbReference type="ChEBI" id="CHEBI:18420"/>
    </ligand>
</feature>
<feature type="binding site" evidence="1">
    <location>
        <position position="495"/>
    </location>
    <ligand>
        <name>Mg(2+)</name>
        <dbReference type="ChEBI" id="CHEBI:18420"/>
    </ligand>
</feature>
<dbReference type="EC" id="2.7.7.8" evidence="1"/>
<dbReference type="EMBL" id="CP000918">
    <property type="protein sequence ID" value="ACO16020.1"/>
    <property type="molecule type" value="Genomic_DNA"/>
</dbReference>
<dbReference type="RefSeq" id="WP_001118976.1">
    <property type="nucleotide sequence ID" value="NC_012468.1"/>
</dbReference>
<dbReference type="SMR" id="C1C5V9"/>
<dbReference type="KEGG" id="snm:SP70585_0652"/>
<dbReference type="HOGENOM" id="CLU_004217_2_2_9"/>
<dbReference type="Proteomes" id="UP000002211">
    <property type="component" value="Chromosome"/>
</dbReference>
<dbReference type="GO" id="GO:0005829">
    <property type="term" value="C:cytosol"/>
    <property type="evidence" value="ECO:0007669"/>
    <property type="project" value="TreeGrafter"/>
</dbReference>
<dbReference type="GO" id="GO:0000175">
    <property type="term" value="F:3'-5'-RNA exonuclease activity"/>
    <property type="evidence" value="ECO:0007669"/>
    <property type="project" value="TreeGrafter"/>
</dbReference>
<dbReference type="GO" id="GO:0000287">
    <property type="term" value="F:magnesium ion binding"/>
    <property type="evidence" value="ECO:0007669"/>
    <property type="project" value="UniProtKB-UniRule"/>
</dbReference>
<dbReference type="GO" id="GO:0004654">
    <property type="term" value="F:polyribonucleotide nucleotidyltransferase activity"/>
    <property type="evidence" value="ECO:0007669"/>
    <property type="project" value="UniProtKB-UniRule"/>
</dbReference>
<dbReference type="GO" id="GO:0003723">
    <property type="term" value="F:RNA binding"/>
    <property type="evidence" value="ECO:0007669"/>
    <property type="project" value="UniProtKB-UniRule"/>
</dbReference>
<dbReference type="GO" id="GO:0006402">
    <property type="term" value="P:mRNA catabolic process"/>
    <property type="evidence" value="ECO:0007669"/>
    <property type="project" value="UniProtKB-UniRule"/>
</dbReference>
<dbReference type="GO" id="GO:0006396">
    <property type="term" value="P:RNA processing"/>
    <property type="evidence" value="ECO:0007669"/>
    <property type="project" value="InterPro"/>
</dbReference>
<dbReference type="CDD" id="cd02393">
    <property type="entry name" value="KH-I_PNPase"/>
    <property type="match status" value="1"/>
</dbReference>
<dbReference type="CDD" id="cd11363">
    <property type="entry name" value="RNase_PH_PNPase_1"/>
    <property type="match status" value="1"/>
</dbReference>
<dbReference type="CDD" id="cd11364">
    <property type="entry name" value="RNase_PH_PNPase_2"/>
    <property type="match status" value="1"/>
</dbReference>
<dbReference type="FunFam" id="2.40.50.140:FF:000023">
    <property type="entry name" value="Polyribonucleotide nucleotidyltransferase"/>
    <property type="match status" value="1"/>
</dbReference>
<dbReference type="FunFam" id="3.30.1370.10:FF:000001">
    <property type="entry name" value="Polyribonucleotide nucleotidyltransferase"/>
    <property type="match status" value="1"/>
</dbReference>
<dbReference type="FunFam" id="3.30.230.70:FF:000001">
    <property type="entry name" value="Polyribonucleotide nucleotidyltransferase"/>
    <property type="match status" value="1"/>
</dbReference>
<dbReference type="FunFam" id="3.30.230.70:FF:000002">
    <property type="entry name" value="Polyribonucleotide nucleotidyltransferase"/>
    <property type="match status" value="1"/>
</dbReference>
<dbReference type="Gene3D" id="3.30.230.70">
    <property type="entry name" value="GHMP Kinase, N-terminal domain"/>
    <property type="match status" value="2"/>
</dbReference>
<dbReference type="Gene3D" id="3.30.1370.10">
    <property type="entry name" value="K Homology domain, type 1"/>
    <property type="match status" value="1"/>
</dbReference>
<dbReference type="Gene3D" id="2.40.50.140">
    <property type="entry name" value="Nucleic acid-binding proteins"/>
    <property type="match status" value="1"/>
</dbReference>
<dbReference type="HAMAP" id="MF_01595">
    <property type="entry name" value="PNPase"/>
    <property type="match status" value="1"/>
</dbReference>
<dbReference type="InterPro" id="IPR001247">
    <property type="entry name" value="ExoRNase_PH_dom1"/>
</dbReference>
<dbReference type="InterPro" id="IPR015847">
    <property type="entry name" value="ExoRNase_PH_dom2"/>
</dbReference>
<dbReference type="InterPro" id="IPR036345">
    <property type="entry name" value="ExoRNase_PH_dom2_sf"/>
</dbReference>
<dbReference type="InterPro" id="IPR004087">
    <property type="entry name" value="KH_dom"/>
</dbReference>
<dbReference type="InterPro" id="IPR004088">
    <property type="entry name" value="KH_dom_type_1"/>
</dbReference>
<dbReference type="InterPro" id="IPR036612">
    <property type="entry name" value="KH_dom_type_1_sf"/>
</dbReference>
<dbReference type="InterPro" id="IPR012340">
    <property type="entry name" value="NA-bd_OB-fold"/>
</dbReference>
<dbReference type="InterPro" id="IPR012162">
    <property type="entry name" value="PNPase"/>
</dbReference>
<dbReference type="InterPro" id="IPR027408">
    <property type="entry name" value="PNPase/RNase_PH_dom_sf"/>
</dbReference>
<dbReference type="InterPro" id="IPR015848">
    <property type="entry name" value="PNPase_PH_RNA-bd_bac/org-type"/>
</dbReference>
<dbReference type="InterPro" id="IPR036456">
    <property type="entry name" value="PNPase_PH_RNA-bd_sf"/>
</dbReference>
<dbReference type="InterPro" id="IPR020568">
    <property type="entry name" value="Ribosomal_Su5_D2-typ_SF"/>
</dbReference>
<dbReference type="InterPro" id="IPR003029">
    <property type="entry name" value="S1_domain"/>
</dbReference>
<dbReference type="NCBIfam" id="TIGR03591">
    <property type="entry name" value="polynuc_phos"/>
    <property type="match status" value="1"/>
</dbReference>
<dbReference type="NCBIfam" id="NF008805">
    <property type="entry name" value="PRK11824.1"/>
    <property type="match status" value="1"/>
</dbReference>
<dbReference type="PANTHER" id="PTHR11252">
    <property type="entry name" value="POLYRIBONUCLEOTIDE NUCLEOTIDYLTRANSFERASE"/>
    <property type="match status" value="1"/>
</dbReference>
<dbReference type="PANTHER" id="PTHR11252:SF0">
    <property type="entry name" value="POLYRIBONUCLEOTIDE NUCLEOTIDYLTRANSFERASE 1, MITOCHONDRIAL"/>
    <property type="match status" value="1"/>
</dbReference>
<dbReference type="Pfam" id="PF00013">
    <property type="entry name" value="KH_1"/>
    <property type="match status" value="1"/>
</dbReference>
<dbReference type="Pfam" id="PF03726">
    <property type="entry name" value="PNPase"/>
    <property type="match status" value="1"/>
</dbReference>
<dbReference type="Pfam" id="PF01138">
    <property type="entry name" value="RNase_PH"/>
    <property type="match status" value="2"/>
</dbReference>
<dbReference type="Pfam" id="PF03725">
    <property type="entry name" value="RNase_PH_C"/>
    <property type="match status" value="2"/>
</dbReference>
<dbReference type="Pfam" id="PF00575">
    <property type="entry name" value="S1"/>
    <property type="match status" value="1"/>
</dbReference>
<dbReference type="PIRSF" id="PIRSF005499">
    <property type="entry name" value="PNPase"/>
    <property type="match status" value="1"/>
</dbReference>
<dbReference type="SMART" id="SM00322">
    <property type="entry name" value="KH"/>
    <property type="match status" value="1"/>
</dbReference>
<dbReference type="SMART" id="SM00316">
    <property type="entry name" value="S1"/>
    <property type="match status" value="1"/>
</dbReference>
<dbReference type="SUPFAM" id="SSF54791">
    <property type="entry name" value="Eukaryotic type KH-domain (KH-domain type I)"/>
    <property type="match status" value="1"/>
</dbReference>
<dbReference type="SUPFAM" id="SSF50249">
    <property type="entry name" value="Nucleic acid-binding proteins"/>
    <property type="match status" value="1"/>
</dbReference>
<dbReference type="SUPFAM" id="SSF46915">
    <property type="entry name" value="Polynucleotide phosphorylase/guanosine pentaphosphate synthase (PNPase/GPSI), domain 3"/>
    <property type="match status" value="1"/>
</dbReference>
<dbReference type="SUPFAM" id="SSF55666">
    <property type="entry name" value="Ribonuclease PH domain 2-like"/>
    <property type="match status" value="2"/>
</dbReference>
<dbReference type="SUPFAM" id="SSF54211">
    <property type="entry name" value="Ribosomal protein S5 domain 2-like"/>
    <property type="match status" value="2"/>
</dbReference>
<dbReference type="PROSITE" id="PS50084">
    <property type="entry name" value="KH_TYPE_1"/>
    <property type="match status" value="1"/>
</dbReference>
<dbReference type="PROSITE" id="PS50126">
    <property type="entry name" value="S1"/>
    <property type="match status" value="1"/>
</dbReference>
<name>PNP_STRP7</name>
<gene>
    <name evidence="1" type="primary">pnp</name>
    <name type="ordered locus">SP70585_0652</name>
</gene>